<reference key="1">
    <citation type="submission" date="2008-02" db="EMBL/GenBank/DDBJ databases">
        <title>Complete sequence of Pseudomonas putida W619.</title>
        <authorList>
            <person name="Copeland A."/>
            <person name="Lucas S."/>
            <person name="Lapidus A."/>
            <person name="Barry K."/>
            <person name="Detter J.C."/>
            <person name="Glavina del Rio T."/>
            <person name="Dalin E."/>
            <person name="Tice H."/>
            <person name="Pitluck S."/>
            <person name="Chain P."/>
            <person name="Malfatti S."/>
            <person name="Shin M."/>
            <person name="Vergez L."/>
            <person name="Schmutz J."/>
            <person name="Larimer F."/>
            <person name="Land M."/>
            <person name="Hauser L."/>
            <person name="Kyrpides N."/>
            <person name="Kim E."/>
            <person name="Taghavi S."/>
            <person name="Vangronsveld D."/>
            <person name="van der Lelie D."/>
            <person name="Richardson P."/>
        </authorList>
    </citation>
    <scope>NUCLEOTIDE SEQUENCE [LARGE SCALE GENOMIC DNA]</scope>
    <source>
        <strain>W619</strain>
    </source>
</reference>
<organism>
    <name type="scientific">Pseudomonas putida (strain W619)</name>
    <dbReference type="NCBI Taxonomy" id="390235"/>
    <lineage>
        <taxon>Bacteria</taxon>
        <taxon>Pseudomonadati</taxon>
        <taxon>Pseudomonadota</taxon>
        <taxon>Gammaproteobacteria</taxon>
        <taxon>Pseudomonadales</taxon>
        <taxon>Pseudomonadaceae</taxon>
        <taxon>Pseudomonas</taxon>
    </lineage>
</organism>
<accession>B1JBM6</accession>
<keyword id="KW-0378">Hydrolase</keyword>
<keyword id="KW-0460">Magnesium</keyword>
<keyword id="KW-0479">Metal-binding</keyword>
<keyword id="KW-0704">Schiff base</keyword>
<gene>
    <name evidence="1" type="primary">phnX</name>
    <name type="ordered locus">PputW619_3462</name>
</gene>
<evidence type="ECO:0000255" key="1">
    <source>
        <dbReference type="HAMAP-Rule" id="MF_01375"/>
    </source>
</evidence>
<proteinExistence type="inferred from homology"/>
<protein>
    <recommendedName>
        <fullName evidence="1">Phosphonoacetaldehyde hydrolase</fullName>
        <shortName evidence="1">Phosphonatase</shortName>
        <ecNumber evidence="1">3.11.1.1</ecNumber>
    </recommendedName>
    <alternativeName>
        <fullName evidence="1">Phosphonoacetaldehyde phosphonohydrolase</fullName>
    </alternativeName>
</protein>
<feature type="chain" id="PRO_1000144835" description="Phosphonoacetaldehyde hydrolase">
    <location>
        <begin position="1"/>
        <end position="275"/>
    </location>
</feature>
<feature type="active site" description="Nucleophile" evidence="1">
    <location>
        <position position="15"/>
    </location>
</feature>
<feature type="active site" description="Schiff-base intermediate with substrate" evidence="1">
    <location>
        <position position="56"/>
    </location>
</feature>
<feature type="binding site" evidence="1">
    <location>
        <position position="15"/>
    </location>
    <ligand>
        <name>Mg(2+)</name>
        <dbReference type="ChEBI" id="CHEBI:18420"/>
    </ligand>
</feature>
<feature type="binding site" evidence="1">
    <location>
        <position position="17"/>
    </location>
    <ligand>
        <name>Mg(2+)</name>
        <dbReference type="ChEBI" id="CHEBI:18420"/>
    </ligand>
</feature>
<feature type="binding site" evidence="1">
    <location>
        <position position="189"/>
    </location>
    <ligand>
        <name>Mg(2+)</name>
        <dbReference type="ChEBI" id="CHEBI:18420"/>
    </ligand>
</feature>
<sequence>MNYSNPTQLQAAILDWAGTVVDFGSFAPTQIFVEAFAEFDVQVSIEEARGPMGMGKWDHIRTLCDVPEIAERYRKVFGRTPTDDDVTDIYNRFMPLQIEKIAVHSALIPGALDTLTGLRQDGLKIGSCSGYPKVVMDKVVELAAQNGYVADHVVATDETPNGRPWPAQALANVIALGIDDVAACVKVDDTVPGILEGRRAGMWTVALVCSGNALGLTWEGYQALSAEQLESERKRIHALFAGSRPHYLIDTINELPEVVADINRRLAKGEMPQAF</sequence>
<name>PHNX_PSEPW</name>
<dbReference type="EC" id="3.11.1.1" evidence="1"/>
<dbReference type="EMBL" id="CP000949">
    <property type="protein sequence ID" value="ACA73945.1"/>
    <property type="molecule type" value="Genomic_DNA"/>
</dbReference>
<dbReference type="SMR" id="B1JBM6"/>
<dbReference type="STRING" id="390235.PputW619_3462"/>
<dbReference type="KEGG" id="ppw:PputW619_3462"/>
<dbReference type="eggNOG" id="COG0637">
    <property type="taxonomic scope" value="Bacteria"/>
</dbReference>
<dbReference type="HOGENOM" id="CLU_045011_12_0_6"/>
<dbReference type="OrthoDB" id="5504491at2"/>
<dbReference type="GO" id="GO:0005829">
    <property type="term" value="C:cytosol"/>
    <property type="evidence" value="ECO:0007669"/>
    <property type="project" value="TreeGrafter"/>
</dbReference>
<dbReference type="GO" id="GO:0000287">
    <property type="term" value="F:magnesium ion binding"/>
    <property type="evidence" value="ECO:0007669"/>
    <property type="project" value="UniProtKB-UniRule"/>
</dbReference>
<dbReference type="GO" id="GO:0008967">
    <property type="term" value="F:phosphoglycolate phosphatase activity"/>
    <property type="evidence" value="ECO:0007669"/>
    <property type="project" value="TreeGrafter"/>
</dbReference>
<dbReference type="GO" id="GO:0050194">
    <property type="term" value="F:phosphonoacetaldehyde hydrolase activity"/>
    <property type="evidence" value="ECO:0007669"/>
    <property type="project" value="UniProtKB-UniRule"/>
</dbReference>
<dbReference type="GO" id="GO:0006281">
    <property type="term" value="P:DNA repair"/>
    <property type="evidence" value="ECO:0007669"/>
    <property type="project" value="TreeGrafter"/>
</dbReference>
<dbReference type="GO" id="GO:0019700">
    <property type="term" value="P:organic phosphonate catabolic process"/>
    <property type="evidence" value="ECO:0007669"/>
    <property type="project" value="InterPro"/>
</dbReference>
<dbReference type="CDD" id="cd02586">
    <property type="entry name" value="HAD_PHN"/>
    <property type="match status" value="1"/>
</dbReference>
<dbReference type="FunFam" id="1.10.150.240:FF:000006">
    <property type="entry name" value="Phosphonoacetaldehyde hydrolase"/>
    <property type="match status" value="1"/>
</dbReference>
<dbReference type="Gene3D" id="3.40.50.1000">
    <property type="entry name" value="HAD superfamily/HAD-like"/>
    <property type="match status" value="1"/>
</dbReference>
<dbReference type="Gene3D" id="1.10.150.240">
    <property type="entry name" value="Putative phosphatase, domain 2"/>
    <property type="match status" value="1"/>
</dbReference>
<dbReference type="HAMAP" id="MF_01375">
    <property type="entry name" value="PhnX"/>
    <property type="match status" value="1"/>
</dbReference>
<dbReference type="InterPro" id="IPR050155">
    <property type="entry name" value="HAD-like_hydrolase_sf"/>
</dbReference>
<dbReference type="InterPro" id="IPR036412">
    <property type="entry name" value="HAD-like_sf"/>
</dbReference>
<dbReference type="InterPro" id="IPR006439">
    <property type="entry name" value="HAD-SF_hydro_IA"/>
</dbReference>
<dbReference type="InterPro" id="IPR023214">
    <property type="entry name" value="HAD_sf"/>
</dbReference>
<dbReference type="InterPro" id="IPR023198">
    <property type="entry name" value="PGP-like_dom2"/>
</dbReference>
<dbReference type="InterPro" id="IPR006323">
    <property type="entry name" value="Phosphonoacetald_hydro"/>
</dbReference>
<dbReference type="NCBIfam" id="TIGR01509">
    <property type="entry name" value="HAD-SF-IA-v3"/>
    <property type="match status" value="1"/>
</dbReference>
<dbReference type="NCBIfam" id="TIGR01422">
    <property type="entry name" value="phosphonatase"/>
    <property type="match status" value="1"/>
</dbReference>
<dbReference type="PANTHER" id="PTHR43434">
    <property type="entry name" value="PHOSPHOGLYCOLATE PHOSPHATASE"/>
    <property type="match status" value="1"/>
</dbReference>
<dbReference type="PANTHER" id="PTHR43434:SF19">
    <property type="entry name" value="PHOSPHONOACETALDEHYDE HYDROLASE"/>
    <property type="match status" value="1"/>
</dbReference>
<dbReference type="Pfam" id="PF00702">
    <property type="entry name" value="Hydrolase"/>
    <property type="match status" value="1"/>
</dbReference>
<dbReference type="SFLD" id="SFLDG01135">
    <property type="entry name" value="C1.5.6:_HAD__Beta-PGM__Phospha"/>
    <property type="match status" value="1"/>
</dbReference>
<dbReference type="SFLD" id="SFLDF00038">
    <property type="entry name" value="phosphonoacetaldehyde_hydrolas"/>
    <property type="match status" value="1"/>
</dbReference>
<dbReference type="SUPFAM" id="SSF56784">
    <property type="entry name" value="HAD-like"/>
    <property type="match status" value="1"/>
</dbReference>
<comment type="function">
    <text evidence="1">Involved in phosphonate degradation.</text>
</comment>
<comment type="catalytic activity">
    <reaction evidence="1">
        <text>phosphonoacetaldehyde + H2O = acetaldehyde + phosphate + H(+)</text>
        <dbReference type="Rhea" id="RHEA:18905"/>
        <dbReference type="ChEBI" id="CHEBI:15343"/>
        <dbReference type="ChEBI" id="CHEBI:15377"/>
        <dbReference type="ChEBI" id="CHEBI:15378"/>
        <dbReference type="ChEBI" id="CHEBI:43474"/>
        <dbReference type="ChEBI" id="CHEBI:58383"/>
        <dbReference type="EC" id="3.11.1.1"/>
    </reaction>
</comment>
<comment type="cofactor">
    <cofactor evidence="1">
        <name>Mg(2+)</name>
        <dbReference type="ChEBI" id="CHEBI:18420"/>
    </cofactor>
    <text evidence="1">Binds 1 Mg(2+) ion per subunit.</text>
</comment>
<comment type="subunit">
    <text evidence="1">Homodimer.</text>
</comment>
<comment type="similarity">
    <text evidence="1">Belongs to the HAD-like hydrolase superfamily. PhnX family.</text>
</comment>